<name>DPO4_AERHH</name>
<protein>
    <recommendedName>
        <fullName evidence="1">DNA polymerase IV</fullName>
        <shortName evidence="1">Pol IV</shortName>
        <ecNumber evidence="1">2.7.7.7</ecNumber>
    </recommendedName>
</protein>
<feature type="chain" id="PRO_1000084876" description="DNA polymerase IV">
    <location>
        <begin position="1"/>
        <end position="350"/>
    </location>
</feature>
<feature type="domain" description="UmuC" evidence="1">
    <location>
        <begin position="4"/>
        <end position="185"/>
    </location>
</feature>
<feature type="active site" evidence="1">
    <location>
        <position position="104"/>
    </location>
</feature>
<feature type="binding site" evidence="1">
    <location>
        <position position="8"/>
    </location>
    <ligand>
        <name>Mg(2+)</name>
        <dbReference type="ChEBI" id="CHEBI:18420"/>
    </ligand>
</feature>
<feature type="binding site" evidence="1">
    <location>
        <position position="103"/>
    </location>
    <ligand>
        <name>Mg(2+)</name>
        <dbReference type="ChEBI" id="CHEBI:18420"/>
    </ligand>
</feature>
<feature type="site" description="Substrate discrimination" evidence="1">
    <location>
        <position position="13"/>
    </location>
</feature>
<dbReference type="EC" id="2.7.7.7" evidence="1"/>
<dbReference type="EMBL" id="CP000462">
    <property type="protein sequence ID" value="ABK37084.1"/>
    <property type="molecule type" value="Genomic_DNA"/>
</dbReference>
<dbReference type="RefSeq" id="WP_011705068.1">
    <property type="nucleotide sequence ID" value="NC_008570.1"/>
</dbReference>
<dbReference type="RefSeq" id="YP_855686.1">
    <property type="nucleotide sequence ID" value="NC_008570.1"/>
</dbReference>
<dbReference type="SMR" id="A0KHD5"/>
<dbReference type="STRING" id="380703.AHA_1145"/>
<dbReference type="EnsemblBacteria" id="ABK37084">
    <property type="protein sequence ID" value="ABK37084"/>
    <property type="gene ID" value="AHA_1145"/>
</dbReference>
<dbReference type="GeneID" id="4489943"/>
<dbReference type="KEGG" id="aha:AHA_1145"/>
<dbReference type="PATRIC" id="fig|380703.7.peg.1150"/>
<dbReference type="eggNOG" id="COG0389">
    <property type="taxonomic scope" value="Bacteria"/>
</dbReference>
<dbReference type="HOGENOM" id="CLU_012348_1_2_6"/>
<dbReference type="OrthoDB" id="9808813at2"/>
<dbReference type="Proteomes" id="UP000000756">
    <property type="component" value="Chromosome"/>
</dbReference>
<dbReference type="GO" id="GO:0005829">
    <property type="term" value="C:cytosol"/>
    <property type="evidence" value="ECO:0007669"/>
    <property type="project" value="TreeGrafter"/>
</dbReference>
<dbReference type="GO" id="GO:0003684">
    <property type="term" value="F:damaged DNA binding"/>
    <property type="evidence" value="ECO:0007669"/>
    <property type="project" value="InterPro"/>
</dbReference>
<dbReference type="GO" id="GO:0003887">
    <property type="term" value="F:DNA-directed DNA polymerase activity"/>
    <property type="evidence" value="ECO:0007669"/>
    <property type="project" value="UniProtKB-UniRule"/>
</dbReference>
<dbReference type="GO" id="GO:0000287">
    <property type="term" value="F:magnesium ion binding"/>
    <property type="evidence" value="ECO:0007669"/>
    <property type="project" value="UniProtKB-UniRule"/>
</dbReference>
<dbReference type="GO" id="GO:0006261">
    <property type="term" value="P:DNA-templated DNA replication"/>
    <property type="evidence" value="ECO:0007669"/>
    <property type="project" value="UniProtKB-UniRule"/>
</dbReference>
<dbReference type="GO" id="GO:0042276">
    <property type="term" value="P:error-prone translesion synthesis"/>
    <property type="evidence" value="ECO:0007669"/>
    <property type="project" value="TreeGrafter"/>
</dbReference>
<dbReference type="GO" id="GO:0009432">
    <property type="term" value="P:SOS response"/>
    <property type="evidence" value="ECO:0007669"/>
    <property type="project" value="TreeGrafter"/>
</dbReference>
<dbReference type="CDD" id="cd03586">
    <property type="entry name" value="PolY_Pol_IV_kappa"/>
    <property type="match status" value="1"/>
</dbReference>
<dbReference type="FunFam" id="3.40.1170.60:FF:000001">
    <property type="entry name" value="DNA polymerase IV"/>
    <property type="match status" value="1"/>
</dbReference>
<dbReference type="Gene3D" id="3.30.70.270">
    <property type="match status" value="1"/>
</dbReference>
<dbReference type="Gene3D" id="3.40.1170.60">
    <property type="match status" value="1"/>
</dbReference>
<dbReference type="Gene3D" id="1.10.150.20">
    <property type="entry name" value="5' to 3' exonuclease, C-terminal subdomain"/>
    <property type="match status" value="1"/>
</dbReference>
<dbReference type="Gene3D" id="3.30.1490.100">
    <property type="entry name" value="DNA polymerase, Y-family, little finger domain"/>
    <property type="match status" value="1"/>
</dbReference>
<dbReference type="HAMAP" id="MF_01113">
    <property type="entry name" value="DNApol_IV"/>
    <property type="match status" value="1"/>
</dbReference>
<dbReference type="InterPro" id="IPR043502">
    <property type="entry name" value="DNA/RNA_pol_sf"/>
</dbReference>
<dbReference type="InterPro" id="IPR036775">
    <property type="entry name" value="DNA_pol_Y-fam_lit_finger_sf"/>
</dbReference>
<dbReference type="InterPro" id="IPR017961">
    <property type="entry name" value="DNA_pol_Y-fam_little_finger"/>
</dbReference>
<dbReference type="InterPro" id="IPR050116">
    <property type="entry name" value="DNA_polymerase-Y"/>
</dbReference>
<dbReference type="InterPro" id="IPR022880">
    <property type="entry name" value="DNApol_IV"/>
</dbReference>
<dbReference type="InterPro" id="IPR024728">
    <property type="entry name" value="PolY_HhH_motif"/>
</dbReference>
<dbReference type="InterPro" id="IPR043128">
    <property type="entry name" value="Rev_trsase/Diguanyl_cyclase"/>
</dbReference>
<dbReference type="InterPro" id="IPR001126">
    <property type="entry name" value="UmuC"/>
</dbReference>
<dbReference type="NCBIfam" id="NF002677">
    <property type="entry name" value="PRK02406.1"/>
    <property type="match status" value="1"/>
</dbReference>
<dbReference type="PANTHER" id="PTHR11076:SF33">
    <property type="entry name" value="DNA POLYMERASE KAPPA"/>
    <property type="match status" value="1"/>
</dbReference>
<dbReference type="PANTHER" id="PTHR11076">
    <property type="entry name" value="DNA REPAIR POLYMERASE UMUC / TRANSFERASE FAMILY MEMBER"/>
    <property type="match status" value="1"/>
</dbReference>
<dbReference type="Pfam" id="PF00817">
    <property type="entry name" value="IMS"/>
    <property type="match status" value="1"/>
</dbReference>
<dbReference type="Pfam" id="PF11799">
    <property type="entry name" value="IMS_C"/>
    <property type="match status" value="1"/>
</dbReference>
<dbReference type="Pfam" id="PF11798">
    <property type="entry name" value="IMS_HHH"/>
    <property type="match status" value="1"/>
</dbReference>
<dbReference type="SUPFAM" id="SSF56672">
    <property type="entry name" value="DNA/RNA polymerases"/>
    <property type="match status" value="1"/>
</dbReference>
<dbReference type="SUPFAM" id="SSF100879">
    <property type="entry name" value="Lesion bypass DNA polymerase (Y-family), little finger domain"/>
    <property type="match status" value="1"/>
</dbReference>
<dbReference type="PROSITE" id="PS50173">
    <property type="entry name" value="UMUC"/>
    <property type="match status" value="1"/>
</dbReference>
<keyword id="KW-0963">Cytoplasm</keyword>
<keyword id="KW-0227">DNA damage</keyword>
<keyword id="KW-0234">DNA repair</keyword>
<keyword id="KW-0235">DNA replication</keyword>
<keyword id="KW-0238">DNA-binding</keyword>
<keyword id="KW-0239">DNA-directed DNA polymerase</keyword>
<keyword id="KW-0460">Magnesium</keyword>
<keyword id="KW-0479">Metal-binding</keyword>
<keyword id="KW-0515">Mutator protein</keyword>
<keyword id="KW-0548">Nucleotidyltransferase</keyword>
<keyword id="KW-1185">Reference proteome</keyword>
<keyword id="KW-0808">Transferase</keyword>
<comment type="function">
    <text evidence="1">Poorly processive, error-prone DNA polymerase involved in untargeted mutagenesis. Copies undamaged DNA at stalled replication forks, which arise in vivo from mismatched or misaligned primer ends. These misaligned primers can be extended by PolIV. Exhibits no 3'-5' exonuclease (proofreading) activity. May be involved in translesional synthesis, in conjunction with the beta clamp from PolIII.</text>
</comment>
<comment type="catalytic activity">
    <reaction evidence="1">
        <text>DNA(n) + a 2'-deoxyribonucleoside 5'-triphosphate = DNA(n+1) + diphosphate</text>
        <dbReference type="Rhea" id="RHEA:22508"/>
        <dbReference type="Rhea" id="RHEA-COMP:17339"/>
        <dbReference type="Rhea" id="RHEA-COMP:17340"/>
        <dbReference type="ChEBI" id="CHEBI:33019"/>
        <dbReference type="ChEBI" id="CHEBI:61560"/>
        <dbReference type="ChEBI" id="CHEBI:173112"/>
        <dbReference type="EC" id="2.7.7.7"/>
    </reaction>
</comment>
<comment type="cofactor">
    <cofactor evidence="1">
        <name>Mg(2+)</name>
        <dbReference type="ChEBI" id="CHEBI:18420"/>
    </cofactor>
    <text evidence="1">Binds 2 magnesium ions per subunit.</text>
</comment>
<comment type="subunit">
    <text evidence="1">Monomer.</text>
</comment>
<comment type="subcellular location">
    <subcellularLocation>
        <location evidence="1">Cytoplasm</location>
    </subcellularLocation>
</comment>
<comment type="similarity">
    <text evidence="1">Belongs to the DNA polymerase type-Y family.</text>
</comment>
<gene>
    <name evidence="1" type="primary">dinB</name>
    <name type="ordered locus">AHA_1145</name>
</gene>
<accession>A0KHD5</accession>
<organism>
    <name type="scientific">Aeromonas hydrophila subsp. hydrophila (strain ATCC 7966 / DSM 30187 / BCRC 13018 / CCUG 14551 / JCM 1027 / KCTC 2358 / NCIMB 9240 / NCTC 8049)</name>
    <dbReference type="NCBI Taxonomy" id="380703"/>
    <lineage>
        <taxon>Bacteria</taxon>
        <taxon>Pseudomonadati</taxon>
        <taxon>Pseudomonadota</taxon>
        <taxon>Gammaproteobacteria</taxon>
        <taxon>Aeromonadales</taxon>
        <taxon>Aeromonadaceae</taxon>
        <taxon>Aeromonas</taxon>
    </lineage>
</organism>
<reference key="1">
    <citation type="journal article" date="2006" name="J. Bacteriol.">
        <title>Genome sequence of Aeromonas hydrophila ATCC 7966T: jack of all trades.</title>
        <authorList>
            <person name="Seshadri R."/>
            <person name="Joseph S.W."/>
            <person name="Chopra A.K."/>
            <person name="Sha J."/>
            <person name="Shaw J."/>
            <person name="Graf J."/>
            <person name="Haft D.H."/>
            <person name="Wu M."/>
            <person name="Ren Q."/>
            <person name="Rosovitz M.J."/>
            <person name="Madupu R."/>
            <person name="Tallon L."/>
            <person name="Kim M."/>
            <person name="Jin S."/>
            <person name="Vuong H."/>
            <person name="Stine O.C."/>
            <person name="Ali A."/>
            <person name="Horneman A.J."/>
            <person name="Heidelberg J.F."/>
        </authorList>
    </citation>
    <scope>NUCLEOTIDE SEQUENCE [LARGE SCALE GENOMIC DNA]</scope>
    <source>
        <strain>ATCC 7966 / DSM 30187 / BCRC 13018 / CCUG 14551 / JCM 1027 / KCTC 2358 / NCIMB 9240 / NCTC 8049</strain>
    </source>
</reference>
<evidence type="ECO:0000255" key="1">
    <source>
        <dbReference type="HAMAP-Rule" id="MF_01113"/>
    </source>
</evidence>
<sequence>MRKIIHIDMDCFYAAVEMRDNPALREVPLAIGGSADRRGVISTCNYVARRFGVRSAMPSALARKLCPPLVLIPGRMAVYKEVSRLLRAIFLRYTEQVEPLSLDEAYLDVTMSPCCGGSATLMAREIRAAINTELGLTASAGVAPNKFLAKLASEQRKPDGLFVIRPQEVDEFVRQLPLGKLPGIGRKTADRLESLGLYSCEDARQLGNEELIARFGKLGEMLAGRIWGHDEQPVQAQRVRKTIGVETTLASDVLDEAACWQVLRQLIPELEQRFSVSHGKEQLMGQGIKLKFADFQQTTVYRRGGYQPERFHDLLHEGLLRAQGKPIRLLGLVVGLPAAGEVNQLALDLA</sequence>
<proteinExistence type="inferred from homology"/>